<accession>Q9TKB8</accession>
<geneLocation type="chloroplast"/>
<comment type="function">
    <text evidence="1">Usually encoded in the trnK tRNA gene intron. Probably assists in splicing its own and other chloroplast group II introns.</text>
</comment>
<comment type="subcellular location">
    <subcellularLocation>
        <location>Plastid</location>
        <location>Chloroplast</location>
    </subcellularLocation>
</comment>
<comment type="similarity">
    <text evidence="1">Belongs to the intron maturase 2 family. MatK subfamily.</text>
</comment>
<evidence type="ECO:0000255" key="1">
    <source>
        <dbReference type="HAMAP-Rule" id="MF_01390"/>
    </source>
</evidence>
<reference key="1">
    <citation type="journal article" date="2000" name="Aust. J. Bot.">
        <title>Molecular systematics of the Leptospermum suballiance (Myrtaceae).</title>
        <authorList>
            <person name="O'Brien M.M."/>
            <person name="Quinn C.J."/>
            <person name="Wilson P.G."/>
        </authorList>
        <dbReference type="AGRICOLA" id="IND22905647"/>
    </citation>
    <scope>NUCLEOTIDE SEQUENCE [GENOMIC DNA]</scope>
</reference>
<organism>
    <name type="scientific">Kunzea ericoides</name>
    <name type="common">White teatree</name>
    <name type="synonym">Leptospermum ericoides</name>
    <dbReference type="NCBI Taxonomy" id="106044"/>
    <lineage>
        <taxon>Eukaryota</taxon>
        <taxon>Viridiplantae</taxon>
        <taxon>Streptophyta</taxon>
        <taxon>Embryophyta</taxon>
        <taxon>Tracheophyta</taxon>
        <taxon>Spermatophyta</taxon>
        <taxon>Magnoliopsida</taxon>
        <taxon>eudicotyledons</taxon>
        <taxon>Gunneridae</taxon>
        <taxon>Pentapetalae</taxon>
        <taxon>rosids</taxon>
        <taxon>malvids</taxon>
        <taxon>Myrtales</taxon>
        <taxon>Myrtaceae</taxon>
        <taxon>Myrtoideae</taxon>
        <taxon>Leptospermeae</taxon>
        <taxon>Kunzea</taxon>
    </lineage>
</organism>
<proteinExistence type="inferred from homology"/>
<name>MATK_KUNER</name>
<protein>
    <recommendedName>
        <fullName evidence="1">Maturase K</fullName>
    </recommendedName>
    <alternativeName>
        <fullName evidence="1">Intron maturase</fullName>
    </alternativeName>
</protein>
<feature type="chain" id="PRO_0000143452" description="Maturase K">
    <location>
        <begin position="1"/>
        <end position="505"/>
    </location>
</feature>
<sequence>MEEFQGYLDXNRSRQHYLLYPLLFREYIYALAHDHGLNRSILFENAGYDNKXSSIIVKRLITRMYQQNSLIFSAKDSIQNQFFGHNKNLYSQILSEGFAVIVEIPFSLRFLFSLERKEIAKSHNLRSIHSIFPFLZDXFTHLDYVSDVLIPYHIHLEILVQTLRYWVKDASSLHLLRFFLHDYWNSFITPKKHITFFLKGNPRLFLFLYNSHICEYEYIFLFLRNQSSHLRSTSSGIFFERIHFYVKIEHFHFVKVFFDNNFQCILWFLKDPFMHYVRYQGKFFMASKDTPLLMNKWKCYLVNLWQYHFSVWFQPGRIDINQLCKYSLDFLGYRSSVRLNSSVVRSQMLENLFLINNAMKKFETIVPIIPLIGSLYKSNFCNTFGHPISKPSRTDSSDSDIIDRFLRICRNLSHYHSGSSKKKSLYRVKYILRLSCVKTLARKHKRTVRTFVKRLGSEFFEEFLTEEEVVFSLIFPRTYSTSRRLYRGQIWYLDITSINDLVNYE</sequence>
<dbReference type="EMBL" id="AF184724">
    <property type="protein sequence ID" value="AAF05931.2"/>
    <property type="molecule type" value="Genomic_DNA"/>
</dbReference>
<dbReference type="GO" id="GO:0009507">
    <property type="term" value="C:chloroplast"/>
    <property type="evidence" value="ECO:0007669"/>
    <property type="project" value="UniProtKB-SubCell"/>
</dbReference>
<dbReference type="GO" id="GO:0003723">
    <property type="term" value="F:RNA binding"/>
    <property type="evidence" value="ECO:0007669"/>
    <property type="project" value="UniProtKB-KW"/>
</dbReference>
<dbReference type="GO" id="GO:0006397">
    <property type="term" value="P:mRNA processing"/>
    <property type="evidence" value="ECO:0007669"/>
    <property type="project" value="UniProtKB-KW"/>
</dbReference>
<dbReference type="GO" id="GO:0008380">
    <property type="term" value="P:RNA splicing"/>
    <property type="evidence" value="ECO:0007669"/>
    <property type="project" value="UniProtKB-UniRule"/>
</dbReference>
<dbReference type="GO" id="GO:0008033">
    <property type="term" value="P:tRNA processing"/>
    <property type="evidence" value="ECO:0007669"/>
    <property type="project" value="UniProtKB-KW"/>
</dbReference>
<dbReference type="HAMAP" id="MF_01390">
    <property type="entry name" value="MatK"/>
    <property type="match status" value="1"/>
</dbReference>
<dbReference type="InterPro" id="IPR024937">
    <property type="entry name" value="Domain_X"/>
</dbReference>
<dbReference type="InterPro" id="IPR002866">
    <property type="entry name" value="Maturase_MatK"/>
</dbReference>
<dbReference type="InterPro" id="IPR024942">
    <property type="entry name" value="Maturase_MatK_N"/>
</dbReference>
<dbReference type="PANTHER" id="PTHR34811">
    <property type="entry name" value="MATURASE K"/>
    <property type="match status" value="1"/>
</dbReference>
<dbReference type="PANTHER" id="PTHR34811:SF1">
    <property type="entry name" value="MATURASE K"/>
    <property type="match status" value="1"/>
</dbReference>
<dbReference type="Pfam" id="PF01348">
    <property type="entry name" value="Intron_maturas2"/>
    <property type="match status" value="1"/>
</dbReference>
<dbReference type="Pfam" id="PF01824">
    <property type="entry name" value="MatK_N"/>
    <property type="match status" value="1"/>
</dbReference>
<keyword id="KW-0150">Chloroplast</keyword>
<keyword id="KW-0507">mRNA processing</keyword>
<keyword id="KW-0934">Plastid</keyword>
<keyword id="KW-0694">RNA-binding</keyword>
<keyword id="KW-0819">tRNA processing</keyword>
<gene>
    <name evidence="1" type="primary">matK</name>
</gene>